<proteinExistence type="evidence at transcript level"/>
<reference key="1">
    <citation type="journal article" date="1997" name="J. Cell Biol.">
        <title>The mesodermal expression of rolling stone (rost) is essential for myoblast fusion in Drosophila and encodes a potential transmembrane protein.</title>
        <authorList>
            <person name="Paululat A."/>
            <person name="Goubeaud A."/>
            <person name="Damm C."/>
            <person name="Knirr S."/>
            <person name="Burchard S."/>
            <person name="Renkawitz-Pohl R."/>
        </authorList>
    </citation>
    <scope>NUCLEOTIDE SEQUENCE [MRNA]</scope>
    <scope>FUNCTION</scope>
    <scope>SUBCELLULAR LOCATION</scope>
    <scope>TISSUE SPECIFICITY</scope>
    <scope>DEVELOPMENTAL STAGE</scope>
    <scope>DISRUPTION PHENOTYPE</scope>
    <source>
        <strain>Canton-S</strain>
        <tissue>Embryo</tissue>
        <tissue>Mesoderm</tissue>
    </source>
</reference>
<reference key="2">
    <citation type="journal article" date="2000" name="Science">
        <title>The genome sequence of Drosophila melanogaster.</title>
        <authorList>
            <person name="Adams M.D."/>
            <person name="Celniker S.E."/>
            <person name="Holt R.A."/>
            <person name="Evans C.A."/>
            <person name="Gocayne J.D."/>
            <person name="Amanatides P.G."/>
            <person name="Scherer S.E."/>
            <person name="Li P.W."/>
            <person name="Hoskins R.A."/>
            <person name="Galle R.F."/>
            <person name="George R.A."/>
            <person name="Lewis S.E."/>
            <person name="Richards S."/>
            <person name="Ashburner M."/>
            <person name="Henderson S.N."/>
            <person name="Sutton G.G."/>
            <person name="Wortman J.R."/>
            <person name="Yandell M.D."/>
            <person name="Zhang Q."/>
            <person name="Chen L.X."/>
            <person name="Brandon R.C."/>
            <person name="Rogers Y.-H.C."/>
            <person name="Blazej R.G."/>
            <person name="Champe M."/>
            <person name="Pfeiffer B.D."/>
            <person name="Wan K.H."/>
            <person name="Doyle C."/>
            <person name="Baxter E.G."/>
            <person name="Helt G."/>
            <person name="Nelson C.R."/>
            <person name="Miklos G.L.G."/>
            <person name="Abril J.F."/>
            <person name="Agbayani A."/>
            <person name="An H.-J."/>
            <person name="Andrews-Pfannkoch C."/>
            <person name="Baldwin D."/>
            <person name="Ballew R.M."/>
            <person name="Basu A."/>
            <person name="Baxendale J."/>
            <person name="Bayraktaroglu L."/>
            <person name="Beasley E.M."/>
            <person name="Beeson K.Y."/>
            <person name="Benos P.V."/>
            <person name="Berman B.P."/>
            <person name="Bhandari D."/>
            <person name="Bolshakov S."/>
            <person name="Borkova D."/>
            <person name="Botchan M.R."/>
            <person name="Bouck J."/>
            <person name="Brokstein P."/>
            <person name="Brottier P."/>
            <person name="Burtis K.C."/>
            <person name="Busam D.A."/>
            <person name="Butler H."/>
            <person name="Cadieu E."/>
            <person name="Center A."/>
            <person name="Chandra I."/>
            <person name="Cherry J.M."/>
            <person name="Cawley S."/>
            <person name="Dahlke C."/>
            <person name="Davenport L.B."/>
            <person name="Davies P."/>
            <person name="de Pablos B."/>
            <person name="Delcher A."/>
            <person name="Deng Z."/>
            <person name="Mays A.D."/>
            <person name="Dew I."/>
            <person name="Dietz S.M."/>
            <person name="Dodson K."/>
            <person name="Doup L.E."/>
            <person name="Downes M."/>
            <person name="Dugan-Rocha S."/>
            <person name="Dunkov B.C."/>
            <person name="Dunn P."/>
            <person name="Durbin K.J."/>
            <person name="Evangelista C.C."/>
            <person name="Ferraz C."/>
            <person name="Ferriera S."/>
            <person name="Fleischmann W."/>
            <person name="Fosler C."/>
            <person name="Gabrielian A.E."/>
            <person name="Garg N.S."/>
            <person name="Gelbart W.M."/>
            <person name="Glasser K."/>
            <person name="Glodek A."/>
            <person name="Gong F."/>
            <person name="Gorrell J.H."/>
            <person name="Gu Z."/>
            <person name="Guan P."/>
            <person name="Harris M."/>
            <person name="Harris N.L."/>
            <person name="Harvey D.A."/>
            <person name="Heiman T.J."/>
            <person name="Hernandez J.R."/>
            <person name="Houck J."/>
            <person name="Hostin D."/>
            <person name="Houston K.A."/>
            <person name="Howland T.J."/>
            <person name="Wei M.-H."/>
            <person name="Ibegwam C."/>
            <person name="Jalali M."/>
            <person name="Kalush F."/>
            <person name="Karpen G.H."/>
            <person name="Ke Z."/>
            <person name="Kennison J.A."/>
            <person name="Ketchum K.A."/>
            <person name="Kimmel B.E."/>
            <person name="Kodira C.D."/>
            <person name="Kraft C.L."/>
            <person name="Kravitz S."/>
            <person name="Kulp D."/>
            <person name="Lai Z."/>
            <person name="Lasko P."/>
            <person name="Lei Y."/>
            <person name="Levitsky A.A."/>
            <person name="Li J.H."/>
            <person name="Li Z."/>
            <person name="Liang Y."/>
            <person name="Lin X."/>
            <person name="Liu X."/>
            <person name="Mattei B."/>
            <person name="McIntosh T.C."/>
            <person name="McLeod M.P."/>
            <person name="McPherson D."/>
            <person name="Merkulov G."/>
            <person name="Milshina N.V."/>
            <person name="Mobarry C."/>
            <person name="Morris J."/>
            <person name="Moshrefi A."/>
            <person name="Mount S.M."/>
            <person name="Moy M."/>
            <person name="Murphy B."/>
            <person name="Murphy L."/>
            <person name="Muzny D.M."/>
            <person name="Nelson D.L."/>
            <person name="Nelson D.R."/>
            <person name="Nelson K.A."/>
            <person name="Nixon K."/>
            <person name="Nusskern D.R."/>
            <person name="Pacleb J.M."/>
            <person name="Palazzolo M."/>
            <person name="Pittman G.S."/>
            <person name="Pan S."/>
            <person name="Pollard J."/>
            <person name="Puri V."/>
            <person name="Reese M.G."/>
            <person name="Reinert K."/>
            <person name="Remington K."/>
            <person name="Saunders R.D.C."/>
            <person name="Scheeler F."/>
            <person name="Shen H."/>
            <person name="Shue B.C."/>
            <person name="Siden-Kiamos I."/>
            <person name="Simpson M."/>
            <person name="Skupski M.P."/>
            <person name="Smith T.J."/>
            <person name="Spier E."/>
            <person name="Spradling A.C."/>
            <person name="Stapleton M."/>
            <person name="Strong R."/>
            <person name="Sun E."/>
            <person name="Svirskas R."/>
            <person name="Tector C."/>
            <person name="Turner R."/>
            <person name="Venter E."/>
            <person name="Wang A.H."/>
            <person name="Wang X."/>
            <person name="Wang Z.-Y."/>
            <person name="Wassarman D.A."/>
            <person name="Weinstock G.M."/>
            <person name="Weissenbach J."/>
            <person name="Williams S.M."/>
            <person name="Woodage T."/>
            <person name="Worley K.C."/>
            <person name="Wu D."/>
            <person name="Yang S."/>
            <person name="Yao Q.A."/>
            <person name="Ye J."/>
            <person name="Yeh R.-F."/>
            <person name="Zaveri J.S."/>
            <person name="Zhan M."/>
            <person name="Zhang G."/>
            <person name="Zhao Q."/>
            <person name="Zheng L."/>
            <person name="Zheng X.H."/>
            <person name="Zhong F.N."/>
            <person name="Zhong W."/>
            <person name="Zhou X."/>
            <person name="Zhu S.C."/>
            <person name="Zhu X."/>
            <person name="Smith H.O."/>
            <person name="Gibbs R.A."/>
            <person name="Myers E.W."/>
            <person name="Rubin G.M."/>
            <person name="Venter J.C."/>
        </authorList>
    </citation>
    <scope>NUCLEOTIDE SEQUENCE [LARGE SCALE GENOMIC DNA]</scope>
    <source>
        <strain>Berkeley</strain>
    </source>
</reference>
<reference key="3">
    <citation type="journal article" date="2002" name="Genome Biol.">
        <title>Annotation of the Drosophila melanogaster euchromatic genome: a systematic review.</title>
        <authorList>
            <person name="Misra S."/>
            <person name="Crosby M.A."/>
            <person name="Mungall C.J."/>
            <person name="Matthews B.B."/>
            <person name="Campbell K.S."/>
            <person name="Hradecky P."/>
            <person name="Huang Y."/>
            <person name="Kaminker J.S."/>
            <person name="Millburn G.H."/>
            <person name="Prochnik S.E."/>
            <person name="Smith C.D."/>
            <person name="Tupy J.L."/>
            <person name="Whitfield E.J."/>
            <person name="Bayraktaroglu L."/>
            <person name="Berman B.P."/>
            <person name="Bettencourt B.R."/>
            <person name="Celniker S.E."/>
            <person name="de Grey A.D.N.J."/>
            <person name="Drysdale R.A."/>
            <person name="Harris N.L."/>
            <person name="Richter J."/>
            <person name="Russo S."/>
            <person name="Schroeder A.J."/>
            <person name="Shu S.Q."/>
            <person name="Stapleton M."/>
            <person name="Yamada C."/>
            <person name="Ashburner M."/>
            <person name="Gelbart W.M."/>
            <person name="Rubin G.M."/>
            <person name="Lewis S.E."/>
        </authorList>
    </citation>
    <scope>GENOME REANNOTATION</scope>
    <source>
        <strain>Berkeley</strain>
    </source>
</reference>
<reference key="4">
    <citation type="submission" date="2004-10" db="EMBL/GenBank/DDBJ databases">
        <authorList>
            <person name="Stapleton M."/>
            <person name="Carlson J.W."/>
            <person name="Chavez C."/>
            <person name="Frise E."/>
            <person name="George R.A."/>
            <person name="Pacleb J.M."/>
            <person name="Park S."/>
            <person name="Wan K.H."/>
            <person name="Yu C."/>
            <person name="Rubin G.M."/>
            <person name="Celniker S.E."/>
        </authorList>
    </citation>
    <scope>NUCLEOTIDE SEQUENCE [LARGE SCALE MRNA]</scope>
    <source>
        <strain>Berkeley</strain>
        <tissue>Head</tissue>
    </source>
</reference>
<reference key="5">
    <citation type="journal article" date="2002" name="Genome Biol.">
        <title>A Drosophila full-length cDNA resource.</title>
        <authorList>
            <person name="Stapleton M."/>
            <person name="Carlson J.W."/>
            <person name="Brokstein P."/>
            <person name="Yu C."/>
            <person name="Champe M."/>
            <person name="George R.A."/>
            <person name="Guarin H."/>
            <person name="Kronmiller B."/>
            <person name="Pacleb J.M."/>
            <person name="Park S."/>
            <person name="Wan K.H."/>
            <person name="Rubin G.M."/>
            <person name="Celniker S.E."/>
        </authorList>
    </citation>
    <scope>NUCLEOTIDE SEQUENCE [LARGE SCALE MRNA] OF 6-275</scope>
    <source>
        <strain>Berkeley</strain>
        <tissue>Embryo</tissue>
    </source>
</reference>
<keyword id="KW-0217">Developmental protein</keyword>
<keyword id="KW-0472">Membrane</keyword>
<keyword id="KW-0514">Muscle protein</keyword>
<keyword id="KW-1185">Reference proteome</keyword>
<keyword id="KW-0812">Transmembrane</keyword>
<keyword id="KW-1133">Transmembrane helix</keyword>
<name>ROST_DROME</name>
<protein>
    <recommendedName>
        <fullName>Protein rolling stone</fullName>
    </recommendedName>
</protein>
<gene>
    <name type="primary">rost</name>
    <name type="ORF">CG9552</name>
</gene>
<comment type="function">
    <text evidence="2">May have a central role in the fusion process during myogenesis, within the somatic mesoderm.</text>
</comment>
<comment type="subcellular location">
    <subcellularLocation>
        <location evidence="2">Membrane</location>
        <topology evidence="2">Multi-pass membrane protein</topology>
    </subcellularLocation>
    <text>Enriched in the embryonic membrane fraction.</text>
</comment>
<comment type="tissue specificity">
    <text evidence="2">Expressed in cells of the somatic mesoderm, most notably the muscle founder cells, between embryonic stages 12 and 14, in growing muscle fibers in dorsal, lateral and ventral positions. At stage 16 strongest expression is in some ventral muscles and muscle 8. At stages 16/17 expression is restricted to some cells of the CNS, the brain and the gonads.</text>
</comment>
<comment type="developmental stage">
    <text evidence="2">Expressed both maternally and zygotically. High level of zygotic expression is seen in embryos from stage 12 onwards and in adults.</text>
</comment>
<comment type="disruption phenotype">
    <text evidence="2">Flies exhibit diminished fusion of embryonic myoblasts to syncytial myotubes.</text>
</comment>
<comment type="sequence caution" evidence="3">
    <conflict type="erroneous initiation">
        <sequence resource="EMBL-CDS" id="AAL28858"/>
    </conflict>
</comment>
<accession>O44252</accession>
<accession>Q5U0W2</accession>
<accession>Q95RK6</accession>
<accession>Q9VLF9</accession>
<organism>
    <name type="scientific">Drosophila melanogaster</name>
    <name type="common">Fruit fly</name>
    <dbReference type="NCBI Taxonomy" id="7227"/>
    <lineage>
        <taxon>Eukaryota</taxon>
        <taxon>Metazoa</taxon>
        <taxon>Ecdysozoa</taxon>
        <taxon>Arthropoda</taxon>
        <taxon>Hexapoda</taxon>
        <taxon>Insecta</taxon>
        <taxon>Pterygota</taxon>
        <taxon>Neoptera</taxon>
        <taxon>Endopterygota</taxon>
        <taxon>Diptera</taxon>
        <taxon>Brachycera</taxon>
        <taxon>Muscomorpha</taxon>
        <taxon>Ephydroidea</taxon>
        <taxon>Drosophilidae</taxon>
        <taxon>Drosophila</taxon>
        <taxon>Sophophora</taxon>
    </lineage>
</organism>
<evidence type="ECO:0000255" key="1"/>
<evidence type="ECO:0000269" key="2">
    <source>
    </source>
</evidence>
<evidence type="ECO:0000305" key="3"/>
<dbReference type="EMBL" id="AF006955">
    <property type="protein sequence ID" value="AAB96894.1"/>
    <property type="molecule type" value="mRNA"/>
</dbReference>
<dbReference type="EMBL" id="AE014134">
    <property type="protein sequence ID" value="AAF52733.1"/>
    <property type="molecule type" value="Genomic_DNA"/>
</dbReference>
<dbReference type="EMBL" id="BT016130">
    <property type="protein sequence ID" value="AAV37015.1"/>
    <property type="molecule type" value="mRNA"/>
</dbReference>
<dbReference type="EMBL" id="AY061310">
    <property type="protein sequence ID" value="AAL28858.1"/>
    <property type="status" value="ALT_INIT"/>
    <property type="molecule type" value="mRNA"/>
</dbReference>
<dbReference type="RefSeq" id="NP_001260274.1">
    <property type="nucleotide sequence ID" value="NM_001273345.1"/>
</dbReference>
<dbReference type="RefSeq" id="NP_001260275.1">
    <property type="nucleotide sequence ID" value="NM_001273346.1"/>
</dbReference>
<dbReference type="RefSeq" id="NP_723435.1">
    <property type="nucleotide sequence ID" value="NM_164842.2"/>
</dbReference>
<dbReference type="SMR" id="O44252"/>
<dbReference type="FunCoup" id="O44252">
    <property type="interactions" value="44"/>
</dbReference>
<dbReference type="PaxDb" id="7227-FBpp0303870"/>
<dbReference type="DNASU" id="34222"/>
<dbReference type="EnsemblMetazoa" id="FBtr0079782">
    <property type="protein sequence ID" value="FBpp0079382"/>
    <property type="gene ID" value="FBgn0011705"/>
</dbReference>
<dbReference type="EnsemblMetazoa" id="FBtr0331453">
    <property type="protein sequence ID" value="FBpp0303870"/>
    <property type="gene ID" value="FBgn0011705"/>
</dbReference>
<dbReference type="EnsemblMetazoa" id="FBtr0331454">
    <property type="protein sequence ID" value="FBpp0303871"/>
    <property type="gene ID" value="FBgn0011705"/>
</dbReference>
<dbReference type="GeneID" id="34222"/>
<dbReference type="KEGG" id="dme:Dmel_CG9552"/>
<dbReference type="AGR" id="FB:FBgn0011705"/>
<dbReference type="CTD" id="34222"/>
<dbReference type="FlyBase" id="FBgn0011705">
    <property type="gene designation" value="rost"/>
</dbReference>
<dbReference type="VEuPathDB" id="VectorBase:FBgn0011705"/>
<dbReference type="eggNOG" id="ENOG502S8CX">
    <property type="taxonomic scope" value="Eukaryota"/>
</dbReference>
<dbReference type="GeneTree" id="ENSGT00730000112105"/>
<dbReference type="HOGENOM" id="CLU_066320_1_0_1"/>
<dbReference type="InParanoid" id="O44252"/>
<dbReference type="OMA" id="IIVQFCD"/>
<dbReference type="OrthoDB" id="419711at2759"/>
<dbReference type="PhylomeDB" id="O44252"/>
<dbReference type="BioGRID-ORCS" id="34222">
    <property type="hits" value="0 hits in 1 CRISPR screen"/>
</dbReference>
<dbReference type="GenomeRNAi" id="34222"/>
<dbReference type="PRO" id="PR:O44252"/>
<dbReference type="Proteomes" id="UP000000803">
    <property type="component" value="Chromosome 2L"/>
</dbReference>
<dbReference type="Bgee" id="FBgn0011705">
    <property type="expression patterns" value="Expressed in enteroblast (Drosophila) in digestive tract and 108 other cell types or tissues"/>
</dbReference>
<dbReference type="ExpressionAtlas" id="O44252">
    <property type="expression patterns" value="baseline and differential"/>
</dbReference>
<dbReference type="GO" id="GO:0016020">
    <property type="term" value="C:membrane"/>
    <property type="evidence" value="ECO:0000314"/>
    <property type="project" value="FlyBase"/>
</dbReference>
<dbReference type="GO" id="GO:0007520">
    <property type="term" value="P:myoblast fusion"/>
    <property type="evidence" value="ECO:0000315"/>
    <property type="project" value="FlyBase"/>
</dbReference>
<dbReference type="InterPro" id="IPR049352">
    <property type="entry name" value="Rost"/>
</dbReference>
<dbReference type="PANTHER" id="PTHR12242:SF46">
    <property type="entry name" value="IP08657P-RELATED"/>
    <property type="match status" value="1"/>
</dbReference>
<dbReference type="PANTHER" id="PTHR12242">
    <property type="entry name" value="OS02G0130600 PROTEIN-RELATED"/>
    <property type="match status" value="1"/>
</dbReference>
<dbReference type="Pfam" id="PF21534">
    <property type="entry name" value="Rost"/>
    <property type="match status" value="1"/>
</dbReference>
<sequence>MQLFDDFCKSFNKELQRANFGFAYNRVHLFYRSQWQKDEINTIYLLYRWIWALFFLGVYIMCVIVQFCDGKFFIYMTNWGFGLCTITMLISAVQVTCWHFDVRSTRSLVQESGHKAETSRGLKIYWWLYNMTLSLALIISTVYWVFLHGKMNKPMRFPAISIITHGMNSVMMLIDFLVIAFPLRILHMVYGMSLAIFFFLFTLIYHLCGGTDEFGNHYVYPILDWNNPNRCMVTFVGIFLLIMCYWVLLFGLYKLKRMFNRAFSVVWSPHAVGLI</sequence>
<feature type="chain" id="PRO_0000097405" description="Protein rolling stone">
    <location>
        <begin position="1"/>
        <end position="275"/>
    </location>
</feature>
<feature type="transmembrane region" description="Helical" evidence="1">
    <location>
        <begin position="45"/>
        <end position="65"/>
    </location>
</feature>
<feature type="transmembrane region" description="Helical" evidence="1">
    <location>
        <begin position="72"/>
        <end position="92"/>
    </location>
</feature>
<feature type="transmembrane region" description="Helical" evidence="1">
    <location>
        <begin position="127"/>
        <end position="147"/>
    </location>
</feature>
<feature type="transmembrane region" description="Helical" evidence="1">
    <location>
        <begin position="162"/>
        <end position="182"/>
    </location>
</feature>
<feature type="transmembrane region" description="Helical" evidence="1">
    <location>
        <begin position="185"/>
        <end position="205"/>
    </location>
</feature>
<feature type="transmembrane region" description="Helical" evidence="1">
    <location>
        <begin position="232"/>
        <end position="252"/>
    </location>
</feature>
<feature type="sequence conflict" description="In Ref. 1; AAB96894." evidence="3" ref="1">
    <original>R</original>
    <variation>T</variation>
    <location>
        <position position="120"/>
    </location>
</feature>